<comment type="subcellular location">
    <subcellularLocation>
        <location evidence="1">Cell membrane</location>
        <topology evidence="1">Multi-pass membrane protein</topology>
    </subcellularLocation>
</comment>
<comment type="similarity">
    <text evidence="1">Belongs to the UPF0391 family.</text>
</comment>
<comment type="sequence caution" evidence="2">
    <conflict type="erroneous initiation">
        <sequence resource="EMBL-CDS" id="CAL94367"/>
    </conflict>
</comment>
<protein>
    <recommendedName>
        <fullName evidence="1">UPF0391 membrane protein azo1750</fullName>
    </recommendedName>
</protein>
<name>Y1750_AZOSB</name>
<sequence length="53" mass="5776">MLRYSVIFLIIAIIAAVFGFGGIAAGAAEIAKILFYLFLVIFLVSLVLGMIRR</sequence>
<reference key="1">
    <citation type="journal article" date="2006" name="Nat. Biotechnol.">
        <title>Complete genome of the mutualistic, N2-fixing grass endophyte Azoarcus sp. strain BH72.</title>
        <authorList>
            <person name="Krause A."/>
            <person name="Ramakumar A."/>
            <person name="Bartels D."/>
            <person name="Battistoni F."/>
            <person name="Bekel T."/>
            <person name="Boch J."/>
            <person name="Boehm M."/>
            <person name="Friedrich F."/>
            <person name="Hurek T."/>
            <person name="Krause L."/>
            <person name="Linke B."/>
            <person name="McHardy A.C."/>
            <person name="Sarkar A."/>
            <person name="Schneiker S."/>
            <person name="Syed A.A."/>
            <person name="Thauer R."/>
            <person name="Vorhoelter F.-J."/>
            <person name="Weidner S."/>
            <person name="Puehler A."/>
            <person name="Reinhold-Hurek B."/>
            <person name="Kaiser O."/>
            <person name="Goesmann A."/>
        </authorList>
    </citation>
    <scope>NUCLEOTIDE SEQUENCE [LARGE SCALE GENOMIC DNA]</scope>
    <source>
        <strain>BH72</strain>
    </source>
</reference>
<organism>
    <name type="scientific">Azoarcus sp. (strain BH72)</name>
    <dbReference type="NCBI Taxonomy" id="418699"/>
    <lineage>
        <taxon>Bacteria</taxon>
        <taxon>Pseudomonadati</taxon>
        <taxon>Pseudomonadota</taxon>
        <taxon>Betaproteobacteria</taxon>
        <taxon>Rhodocyclales</taxon>
        <taxon>Zoogloeaceae</taxon>
        <taxon>Azoarcus</taxon>
    </lineage>
</organism>
<proteinExistence type="inferred from homology"/>
<accession>A1K6B2</accession>
<keyword id="KW-1003">Cell membrane</keyword>
<keyword id="KW-0472">Membrane</keyword>
<keyword id="KW-1185">Reference proteome</keyword>
<keyword id="KW-0812">Transmembrane</keyword>
<keyword id="KW-1133">Transmembrane helix</keyword>
<gene>
    <name type="ordered locus">azo1750</name>
</gene>
<dbReference type="EMBL" id="AM406670">
    <property type="protein sequence ID" value="CAL94367.1"/>
    <property type="status" value="ALT_INIT"/>
    <property type="molecule type" value="Genomic_DNA"/>
</dbReference>
<dbReference type="RefSeq" id="WP_041642488.1">
    <property type="nucleotide sequence ID" value="NC_008702.1"/>
</dbReference>
<dbReference type="KEGG" id="aoa:dqs_1900"/>
<dbReference type="KEGG" id="azo:azo1750"/>
<dbReference type="eggNOG" id="COG5487">
    <property type="taxonomic scope" value="Bacteria"/>
</dbReference>
<dbReference type="HOGENOM" id="CLU_1674341_0_0_4"/>
<dbReference type="Proteomes" id="UP000002588">
    <property type="component" value="Chromosome"/>
</dbReference>
<dbReference type="GO" id="GO:0005886">
    <property type="term" value="C:plasma membrane"/>
    <property type="evidence" value="ECO:0007669"/>
    <property type="project" value="UniProtKB-SubCell"/>
</dbReference>
<dbReference type="HAMAP" id="MF_01361">
    <property type="entry name" value="UPF0391"/>
    <property type="match status" value="1"/>
</dbReference>
<dbReference type="InterPro" id="IPR009760">
    <property type="entry name" value="DUF1328"/>
</dbReference>
<dbReference type="NCBIfam" id="NF010226">
    <property type="entry name" value="PRK13682.1-1"/>
    <property type="match status" value="1"/>
</dbReference>
<dbReference type="NCBIfam" id="NF010228">
    <property type="entry name" value="PRK13682.1-3"/>
    <property type="match status" value="1"/>
</dbReference>
<dbReference type="NCBIfam" id="NF010229">
    <property type="entry name" value="PRK13682.1-4"/>
    <property type="match status" value="1"/>
</dbReference>
<dbReference type="Pfam" id="PF07043">
    <property type="entry name" value="DUF1328"/>
    <property type="match status" value="1"/>
</dbReference>
<dbReference type="PIRSF" id="PIRSF036466">
    <property type="entry name" value="UCP036466"/>
    <property type="match status" value="1"/>
</dbReference>
<feature type="chain" id="PRO_0000298588" description="UPF0391 membrane protein azo1750">
    <location>
        <begin position="1"/>
        <end position="53"/>
    </location>
</feature>
<feature type="transmembrane region" description="Helical" evidence="1">
    <location>
        <begin position="6"/>
        <end position="26"/>
    </location>
</feature>
<feature type="transmembrane region" description="Helical" evidence="1">
    <location>
        <begin position="30"/>
        <end position="50"/>
    </location>
</feature>
<evidence type="ECO:0000255" key="1">
    <source>
        <dbReference type="HAMAP-Rule" id="MF_01361"/>
    </source>
</evidence>
<evidence type="ECO:0000305" key="2"/>